<feature type="chain" id="PRO_1000188546" description="Probable dual-specificity RNA methyltransferase RlmN">
    <location>
        <begin position="1"/>
        <end position="362"/>
    </location>
</feature>
<feature type="domain" description="Radical SAM core" evidence="2">
    <location>
        <begin position="111"/>
        <end position="344"/>
    </location>
</feature>
<feature type="active site" description="Proton acceptor" evidence="1">
    <location>
        <position position="105"/>
    </location>
</feature>
<feature type="active site" description="S-methylcysteine intermediate" evidence="1">
    <location>
        <position position="349"/>
    </location>
</feature>
<feature type="binding site" evidence="1">
    <location>
        <position position="125"/>
    </location>
    <ligand>
        <name>[4Fe-4S] cluster</name>
        <dbReference type="ChEBI" id="CHEBI:49883"/>
        <note>4Fe-4S-S-AdoMet</note>
    </ligand>
</feature>
<feature type="binding site" evidence="1">
    <location>
        <position position="129"/>
    </location>
    <ligand>
        <name>[4Fe-4S] cluster</name>
        <dbReference type="ChEBI" id="CHEBI:49883"/>
        <note>4Fe-4S-S-AdoMet</note>
    </ligand>
</feature>
<feature type="binding site" evidence="1">
    <location>
        <position position="132"/>
    </location>
    <ligand>
        <name>[4Fe-4S] cluster</name>
        <dbReference type="ChEBI" id="CHEBI:49883"/>
        <note>4Fe-4S-S-AdoMet</note>
    </ligand>
</feature>
<feature type="binding site" evidence="1">
    <location>
        <begin position="175"/>
        <end position="176"/>
    </location>
    <ligand>
        <name>S-adenosyl-L-methionine</name>
        <dbReference type="ChEBI" id="CHEBI:59789"/>
    </ligand>
</feature>
<feature type="binding site" evidence="1">
    <location>
        <position position="207"/>
    </location>
    <ligand>
        <name>S-adenosyl-L-methionine</name>
        <dbReference type="ChEBI" id="CHEBI:59789"/>
    </ligand>
</feature>
<feature type="binding site" evidence="1">
    <location>
        <begin position="230"/>
        <end position="232"/>
    </location>
    <ligand>
        <name>S-adenosyl-L-methionine</name>
        <dbReference type="ChEBI" id="CHEBI:59789"/>
    </ligand>
</feature>
<feature type="binding site" evidence="1">
    <location>
        <position position="306"/>
    </location>
    <ligand>
        <name>S-adenosyl-L-methionine</name>
        <dbReference type="ChEBI" id="CHEBI:59789"/>
    </ligand>
</feature>
<feature type="disulfide bond" description="(transient)" evidence="1">
    <location>
        <begin position="118"/>
        <end position="349"/>
    </location>
</feature>
<proteinExistence type="inferred from homology"/>
<protein>
    <recommendedName>
        <fullName evidence="1">Probable dual-specificity RNA methyltransferase RlmN</fullName>
        <ecNumber evidence="1">2.1.1.192</ecNumber>
    </recommendedName>
    <alternativeName>
        <fullName evidence="1">23S rRNA (adenine(2503)-C(2))-methyltransferase</fullName>
    </alternativeName>
    <alternativeName>
        <fullName evidence="1">23S rRNA m2A2503 methyltransferase</fullName>
    </alternativeName>
    <alternativeName>
        <fullName evidence="1">Ribosomal RNA large subunit methyltransferase N</fullName>
    </alternativeName>
    <alternativeName>
        <fullName evidence="1">tRNA (adenine(37)-C(2))-methyltransferase</fullName>
    </alternativeName>
    <alternativeName>
        <fullName evidence="1">tRNA m2A37 methyltransferase</fullName>
    </alternativeName>
</protein>
<keyword id="KW-0004">4Fe-4S</keyword>
<keyword id="KW-0963">Cytoplasm</keyword>
<keyword id="KW-1015">Disulfide bond</keyword>
<keyword id="KW-0408">Iron</keyword>
<keyword id="KW-0411">Iron-sulfur</keyword>
<keyword id="KW-0479">Metal-binding</keyword>
<keyword id="KW-0489">Methyltransferase</keyword>
<keyword id="KW-0698">rRNA processing</keyword>
<keyword id="KW-0949">S-adenosyl-L-methionine</keyword>
<keyword id="KW-0808">Transferase</keyword>
<keyword id="KW-0819">tRNA processing</keyword>
<gene>
    <name evidence="1" type="primary">rlmN</name>
    <name type="ordered locus">BAMEG_0629</name>
</gene>
<evidence type="ECO:0000255" key="1">
    <source>
        <dbReference type="HAMAP-Rule" id="MF_01849"/>
    </source>
</evidence>
<evidence type="ECO:0000255" key="2">
    <source>
        <dbReference type="PROSITE-ProRule" id="PRU01266"/>
    </source>
</evidence>
<reference key="1">
    <citation type="submission" date="2008-10" db="EMBL/GenBank/DDBJ databases">
        <title>Genome sequence of Bacillus anthracis str. CDC 684.</title>
        <authorList>
            <person name="Dodson R.J."/>
            <person name="Munk A.C."/>
            <person name="Brettin T."/>
            <person name="Bruce D."/>
            <person name="Detter C."/>
            <person name="Tapia R."/>
            <person name="Han C."/>
            <person name="Sutton G."/>
            <person name="Sims D."/>
        </authorList>
    </citation>
    <scope>NUCLEOTIDE SEQUENCE [LARGE SCALE GENOMIC DNA]</scope>
    <source>
        <strain>CDC 684 / NRRL 3495</strain>
    </source>
</reference>
<sequence>METTVRKQKKNLETKKPSIYSLQLHEMQDWLKEQGEPKFRAGQIFDWLYKKRVKNYEDMSNLSKGLREKLSNSFDITTLHTLVKQTSSDGTIKFLFQLYDGYSIETVLMRHEYGNSICVTTQVGCRIGCTFCASTLGGLKRNLEAGEIVAQVVEVQRALDESEERVSSLVVMGIGEPFDNYDNLMGFLRIINHEKGLHIGARHMTVSTSGIIPKIYKFAEEDLQINFAISLHAPNSELRSKLMPINRAYKLPDLMEAIKYYVNRTGRRITFEYGLFGGENDQVEHAEELAALLKGVKCHVNLIPVNYVPERDYVRTPREQIFLFEKTLKDRGVNVTIRREQGHDIDAACGQLRAKERKEETR</sequence>
<comment type="function">
    <text evidence="1">Specifically methylates position 2 of adenine 2503 in 23S rRNA and position 2 of adenine 37 in tRNAs.</text>
</comment>
<comment type="catalytic activity">
    <reaction evidence="1">
        <text>adenosine(2503) in 23S rRNA + 2 reduced [2Fe-2S]-[ferredoxin] + 2 S-adenosyl-L-methionine = 2-methyladenosine(2503) in 23S rRNA + 5'-deoxyadenosine + L-methionine + 2 oxidized [2Fe-2S]-[ferredoxin] + S-adenosyl-L-homocysteine</text>
        <dbReference type="Rhea" id="RHEA:42916"/>
        <dbReference type="Rhea" id="RHEA-COMP:10000"/>
        <dbReference type="Rhea" id="RHEA-COMP:10001"/>
        <dbReference type="Rhea" id="RHEA-COMP:10152"/>
        <dbReference type="Rhea" id="RHEA-COMP:10282"/>
        <dbReference type="ChEBI" id="CHEBI:17319"/>
        <dbReference type="ChEBI" id="CHEBI:33737"/>
        <dbReference type="ChEBI" id="CHEBI:33738"/>
        <dbReference type="ChEBI" id="CHEBI:57844"/>
        <dbReference type="ChEBI" id="CHEBI:57856"/>
        <dbReference type="ChEBI" id="CHEBI:59789"/>
        <dbReference type="ChEBI" id="CHEBI:74411"/>
        <dbReference type="ChEBI" id="CHEBI:74497"/>
        <dbReference type="EC" id="2.1.1.192"/>
    </reaction>
</comment>
<comment type="catalytic activity">
    <reaction evidence="1">
        <text>adenosine(37) in tRNA + 2 reduced [2Fe-2S]-[ferredoxin] + 2 S-adenosyl-L-methionine = 2-methyladenosine(37) in tRNA + 5'-deoxyadenosine + L-methionine + 2 oxidized [2Fe-2S]-[ferredoxin] + S-adenosyl-L-homocysteine</text>
        <dbReference type="Rhea" id="RHEA:43332"/>
        <dbReference type="Rhea" id="RHEA-COMP:10000"/>
        <dbReference type="Rhea" id="RHEA-COMP:10001"/>
        <dbReference type="Rhea" id="RHEA-COMP:10162"/>
        <dbReference type="Rhea" id="RHEA-COMP:10485"/>
        <dbReference type="ChEBI" id="CHEBI:17319"/>
        <dbReference type="ChEBI" id="CHEBI:33737"/>
        <dbReference type="ChEBI" id="CHEBI:33738"/>
        <dbReference type="ChEBI" id="CHEBI:57844"/>
        <dbReference type="ChEBI" id="CHEBI:57856"/>
        <dbReference type="ChEBI" id="CHEBI:59789"/>
        <dbReference type="ChEBI" id="CHEBI:74411"/>
        <dbReference type="ChEBI" id="CHEBI:74497"/>
        <dbReference type="EC" id="2.1.1.192"/>
    </reaction>
</comment>
<comment type="cofactor">
    <cofactor evidence="1">
        <name>[4Fe-4S] cluster</name>
        <dbReference type="ChEBI" id="CHEBI:49883"/>
    </cofactor>
    <text evidence="1">Binds 1 [4Fe-4S] cluster. The cluster is coordinated with 3 cysteines and an exchangeable S-adenosyl-L-methionine.</text>
</comment>
<comment type="subcellular location">
    <subcellularLocation>
        <location evidence="1">Cytoplasm</location>
    </subcellularLocation>
</comment>
<comment type="miscellaneous">
    <text evidence="1">Reaction proceeds by a ping-pong mechanism involving intermediate methylation of a conserved cysteine residue.</text>
</comment>
<comment type="similarity">
    <text evidence="1">Belongs to the radical SAM superfamily. RlmN family.</text>
</comment>
<name>RLMN_BACAC</name>
<organism>
    <name type="scientific">Bacillus anthracis (strain CDC 684 / NRRL 3495)</name>
    <dbReference type="NCBI Taxonomy" id="568206"/>
    <lineage>
        <taxon>Bacteria</taxon>
        <taxon>Bacillati</taxon>
        <taxon>Bacillota</taxon>
        <taxon>Bacilli</taxon>
        <taxon>Bacillales</taxon>
        <taxon>Bacillaceae</taxon>
        <taxon>Bacillus</taxon>
        <taxon>Bacillus cereus group</taxon>
    </lineage>
</organism>
<accession>C3L763</accession>
<dbReference type="EC" id="2.1.1.192" evidence="1"/>
<dbReference type="EMBL" id="CP001215">
    <property type="protein sequence ID" value="ACP16717.1"/>
    <property type="molecule type" value="Genomic_DNA"/>
</dbReference>
<dbReference type="RefSeq" id="WP_000450542.1">
    <property type="nucleotide sequence ID" value="NC_012581.1"/>
</dbReference>
<dbReference type="SMR" id="C3L763"/>
<dbReference type="KEGG" id="bah:BAMEG_0629"/>
<dbReference type="HOGENOM" id="CLU_029101_0_1_9"/>
<dbReference type="GO" id="GO:0005737">
    <property type="term" value="C:cytoplasm"/>
    <property type="evidence" value="ECO:0007669"/>
    <property type="project" value="UniProtKB-SubCell"/>
</dbReference>
<dbReference type="GO" id="GO:0051539">
    <property type="term" value="F:4 iron, 4 sulfur cluster binding"/>
    <property type="evidence" value="ECO:0007669"/>
    <property type="project" value="UniProtKB-UniRule"/>
</dbReference>
<dbReference type="GO" id="GO:0046872">
    <property type="term" value="F:metal ion binding"/>
    <property type="evidence" value="ECO:0007669"/>
    <property type="project" value="UniProtKB-KW"/>
</dbReference>
<dbReference type="GO" id="GO:0070040">
    <property type="term" value="F:rRNA (adenine(2503)-C2-)-methyltransferase activity"/>
    <property type="evidence" value="ECO:0007669"/>
    <property type="project" value="UniProtKB-UniRule"/>
</dbReference>
<dbReference type="GO" id="GO:0019843">
    <property type="term" value="F:rRNA binding"/>
    <property type="evidence" value="ECO:0007669"/>
    <property type="project" value="UniProtKB-UniRule"/>
</dbReference>
<dbReference type="GO" id="GO:0002935">
    <property type="term" value="F:tRNA (adenine(37)-C2)-methyltransferase activity"/>
    <property type="evidence" value="ECO:0007669"/>
    <property type="project" value="UniProtKB-UniRule"/>
</dbReference>
<dbReference type="GO" id="GO:0000049">
    <property type="term" value="F:tRNA binding"/>
    <property type="evidence" value="ECO:0007669"/>
    <property type="project" value="UniProtKB-UniRule"/>
</dbReference>
<dbReference type="GO" id="GO:0070475">
    <property type="term" value="P:rRNA base methylation"/>
    <property type="evidence" value="ECO:0007669"/>
    <property type="project" value="UniProtKB-UniRule"/>
</dbReference>
<dbReference type="GO" id="GO:0030488">
    <property type="term" value="P:tRNA methylation"/>
    <property type="evidence" value="ECO:0007669"/>
    <property type="project" value="UniProtKB-UniRule"/>
</dbReference>
<dbReference type="CDD" id="cd01335">
    <property type="entry name" value="Radical_SAM"/>
    <property type="match status" value="1"/>
</dbReference>
<dbReference type="FunFam" id="1.10.150.530:FF:000002">
    <property type="entry name" value="Probable dual-specificity RNA methyltransferase RlmN"/>
    <property type="match status" value="1"/>
</dbReference>
<dbReference type="FunFam" id="3.20.20.70:FF:000014">
    <property type="entry name" value="Probable dual-specificity RNA methyltransferase RlmN"/>
    <property type="match status" value="1"/>
</dbReference>
<dbReference type="Gene3D" id="1.10.150.530">
    <property type="match status" value="1"/>
</dbReference>
<dbReference type="Gene3D" id="3.20.20.70">
    <property type="entry name" value="Aldolase class I"/>
    <property type="match status" value="1"/>
</dbReference>
<dbReference type="HAMAP" id="MF_01849">
    <property type="entry name" value="RNA_methyltr_RlmN"/>
    <property type="match status" value="1"/>
</dbReference>
<dbReference type="InterPro" id="IPR013785">
    <property type="entry name" value="Aldolase_TIM"/>
</dbReference>
<dbReference type="InterPro" id="IPR040072">
    <property type="entry name" value="Methyltransferase_A"/>
</dbReference>
<dbReference type="InterPro" id="IPR048641">
    <property type="entry name" value="RlmN_N"/>
</dbReference>
<dbReference type="InterPro" id="IPR027492">
    <property type="entry name" value="RNA_MTrfase_RlmN"/>
</dbReference>
<dbReference type="InterPro" id="IPR004383">
    <property type="entry name" value="rRNA_lsu_MTrfase_RlmN/Cfr"/>
</dbReference>
<dbReference type="InterPro" id="IPR007197">
    <property type="entry name" value="rSAM"/>
</dbReference>
<dbReference type="NCBIfam" id="TIGR00048">
    <property type="entry name" value="rRNA_mod_RlmN"/>
    <property type="match status" value="1"/>
</dbReference>
<dbReference type="PANTHER" id="PTHR30544">
    <property type="entry name" value="23S RRNA METHYLTRANSFERASE"/>
    <property type="match status" value="1"/>
</dbReference>
<dbReference type="PANTHER" id="PTHR30544:SF5">
    <property type="entry name" value="RADICAL SAM CORE DOMAIN-CONTAINING PROTEIN"/>
    <property type="match status" value="1"/>
</dbReference>
<dbReference type="Pfam" id="PF04055">
    <property type="entry name" value="Radical_SAM"/>
    <property type="match status" value="1"/>
</dbReference>
<dbReference type="Pfam" id="PF21016">
    <property type="entry name" value="RlmN_N"/>
    <property type="match status" value="1"/>
</dbReference>
<dbReference type="PIRSF" id="PIRSF006004">
    <property type="entry name" value="CHP00048"/>
    <property type="match status" value="1"/>
</dbReference>
<dbReference type="SFLD" id="SFLDF00275">
    <property type="entry name" value="adenosine_C2_methyltransferase"/>
    <property type="match status" value="1"/>
</dbReference>
<dbReference type="SFLD" id="SFLDG01062">
    <property type="entry name" value="methyltransferase_(Class_A)"/>
    <property type="match status" value="1"/>
</dbReference>
<dbReference type="SUPFAM" id="SSF102114">
    <property type="entry name" value="Radical SAM enzymes"/>
    <property type="match status" value="1"/>
</dbReference>
<dbReference type="PROSITE" id="PS51918">
    <property type="entry name" value="RADICAL_SAM"/>
    <property type="match status" value="1"/>
</dbReference>